<comment type="function">
    <text evidence="3">Probable neurotoxin.</text>
</comment>
<comment type="subcellular location">
    <subcellularLocation>
        <location evidence="4">Secreted</location>
    </subcellularLocation>
</comment>
<comment type="tissue specificity">
    <text evidence="4">Expressed by the venom duct.</text>
</comment>
<comment type="domain">
    <text evidence="3">The cysteine framework is VI/VII (C-C-CC-C-C).</text>
</comment>
<comment type="domain">
    <text evidence="3">The presence of a 'disulfide through disulfide knot' structurally defines this protein as a knottin.</text>
</comment>
<organism>
    <name type="scientific">Californiconus californicus</name>
    <name type="common">California cone</name>
    <name type="synonym">Conus californicus</name>
    <dbReference type="NCBI Taxonomy" id="1736779"/>
    <lineage>
        <taxon>Eukaryota</taxon>
        <taxon>Metazoa</taxon>
        <taxon>Spiralia</taxon>
        <taxon>Lophotrochozoa</taxon>
        <taxon>Mollusca</taxon>
        <taxon>Gastropoda</taxon>
        <taxon>Caenogastropoda</taxon>
        <taxon>Neogastropoda</taxon>
        <taxon>Conoidea</taxon>
        <taxon>Conidae</taxon>
        <taxon>Californiconus</taxon>
    </lineage>
</organism>
<feature type="signal peptide" evidence="1">
    <location>
        <begin position="1"/>
        <end position="19"/>
    </location>
</feature>
<feature type="chain" id="PRO_0000450961" description="Conotoxin Cal6.17" evidence="3">
    <location>
        <begin position="20"/>
        <end position="54"/>
    </location>
</feature>
<feature type="disulfide bond" evidence="3">
    <location>
        <begin position="24"/>
        <end position="39"/>
    </location>
</feature>
<feature type="disulfide bond" evidence="3">
    <location>
        <begin position="32"/>
        <end position="49"/>
    </location>
</feature>
<feature type="disulfide bond" evidence="3">
    <location>
        <begin position="38"/>
        <end position="53"/>
    </location>
</feature>
<reference key="1">
    <citation type="journal article" date="2019" name="Toxins">
        <title>The diversified O-superfamily in Californiconus californicus presents a conotoxin with antimycobacterial activity.</title>
        <authorList>
            <person name="Bernaldez-Sarabia J."/>
            <person name="Figueroa-Montiel A."/>
            <person name="Duenas S."/>
            <person name="Cervantes-Luevano K."/>
            <person name="Beltran J.A."/>
            <person name="Ortiz E."/>
            <person name="Jimenez S."/>
            <person name="Possani L.D."/>
            <person name="Paniagua-Solis J.F."/>
            <person name="Gonzalez-Canudas J."/>
            <person name="Licea-Navarro A."/>
        </authorList>
    </citation>
    <scope>NUCLEOTIDE SEQUENCE [MRNA]</scope>
    <source>
        <tissue>Venom duct</tissue>
    </source>
</reference>
<protein>
    <recommendedName>
        <fullName evidence="3">Conotoxin Cal6.17</fullName>
    </recommendedName>
    <alternativeName>
        <fullName evidence="2">O3_cl6d</fullName>
    </alternativeName>
</protein>
<name>C617_CONCL</name>
<dbReference type="GO" id="GO:0005576">
    <property type="term" value="C:extracellular region"/>
    <property type="evidence" value="ECO:0007669"/>
    <property type="project" value="UniProtKB-SubCell"/>
</dbReference>
<dbReference type="GO" id="GO:0090729">
    <property type="term" value="F:toxin activity"/>
    <property type="evidence" value="ECO:0007669"/>
    <property type="project" value="UniProtKB-KW"/>
</dbReference>
<sequence length="54" mass="5507">MSGTGVLLLTLLLLVTMATSDDACSLLNGDDCGPGELCCTPSGDHQGTCETSCW</sequence>
<accession>P0DTX9</accession>
<proteinExistence type="inferred from homology"/>
<evidence type="ECO:0000255" key="1"/>
<evidence type="ECO:0000303" key="2">
    <source>
    </source>
</evidence>
<evidence type="ECO:0000305" key="3"/>
<evidence type="ECO:0000305" key="4">
    <source>
    </source>
</evidence>
<keyword id="KW-1015">Disulfide bond</keyword>
<keyword id="KW-0960">Knottin</keyword>
<keyword id="KW-0528">Neurotoxin</keyword>
<keyword id="KW-0964">Secreted</keyword>
<keyword id="KW-0732">Signal</keyword>
<keyword id="KW-0800">Toxin</keyword>